<gene>
    <name evidence="1" type="primary">rpsE</name>
    <name type="ordered locus">Daro_0336</name>
</gene>
<proteinExistence type="inferred from homology"/>
<organism>
    <name type="scientific">Dechloromonas aromatica (strain RCB)</name>
    <dbReference type="NCBI Taxonomy" id="159087"/>
    <lineage>
        <taxon>Bacteria</taxon>
        <taxon>Pseudomonadati</taxon>
        <taxon>Pseudomonadota</taxon>
        <taxon>Betaproteobacteria</taxon>
        <taxon>Rhodocyclales</taxon>
        <taxon>Azonexaceae</taxon>
        <taxon>Dechloromonas</taxon>
    </lineage>
</organism>
<reference key="1">
    <citation type="journal article" date="2009" name="BMC Genomics">
        <title>Metabolic analysis of the soil microbe Dechloromonas aromatica str. RCB: indications of a surprisingly complex life-style and cryptic anaerobic pathways for aromatic degradation.</title>
        <authorList>
            <person name="Salinero K.K."/>
            <person name="Keller K."/>
            <person name="Feil W.S."/>
            <person name="Feil H."/>
            <person name="Trong S."/>
            <person name="Di Bartolo G."/>
            <person name="Lapidus A."/>
        </authorList>
    </citation>
    <scope>NUCLEOTIDE SEQUENCE [LARGE SCALE GENOMIC DNA]</scope>
    <source>
        <strain>RCB</strain>
    </source>
</reference>
<comment type="function">
    <text evidence="1">With S4 and S12 plays an important role in translational accuracy.</text>
</comment>
<comment type="function">
    <text evidence="1">Located at the back of the 30S subunit body where it stabilizes the conformation of the head with respect to the body.</text>
</comment>
<comment type="subunit">
    <text evidence="1">Part of the 30S ribosomal subunit. Contacts proteins S4 and S8.</text>
</comment>
<comment type="domain">
    <text>The N-terminal domain interacts with the head of the 30S subunit; the C-terminal domain interacts with the body and contacts protein S4. The interaction surface between S4 and S5 is involved in control of translational fidelity.</text>
</comment>
<comment type="similarity">
    <text evidence="1">Belongs to the universal ribosomal protein uS5 family.</text>
</comment>
<dbReference type="EMBL" id="CP000089">
    <property type="protein sequence ID" value="AAZ45095.1"/>
    <property type="molecule type" value="Genomic_DNA"/>
</dbReference>
<dbReference type="SMR" id="Q47J86"/>
<dbReference type="STRING" id="159087.Daro_0336"/>
<dbReference type="KEGG" id="dar:Daro_0336"/>
<dbReference type="eggNOG" id="COG0098">
    <property type="taxonomic scope" value="Bacteria"/>
</dbReference>
<dbReference type="HOGENOM" id="CLU_065898_2_2_4"/>
<dbReference type="OrthoDB" id="9809045at2"/>
<dbReference type="GO" id="GO:0015935">
    <property type="term" value="C:small ribosomal subunit"/>
    <property type="evidence" value="ECO:0007669"/>
    <property type="project" value="InterPro"/>
</dbReference>
<dbReference type="GO" id="GO:0019843">
    <property type="term" value="F:rRNA binding"/>
    <property type="evidence" value="ECO:0007669"/>
    <property type="project" value="UniProtKB-UniRule"/>
</dbReference>
<dbReference type="GO" id="GO:0003735">
    <property type="term" value="F:structural constituent of ribosome"/>
    <property type="evidence" value="ECO:0007669"/>
    <property type="project" value="InterPro"/>
</dbReference>
<dbReference type="GO" id="GO:0006412">
    <property type="term" value="P:translation"/>
    <property type="evidence" value="ECO:0007669"/>
    <property type="project" value="UniProtKB-UniRule"/>
</dbReference>
<dbReference type="FunFam" id="3.30.160.20:FF:000001">
    <property type="entry name" value="30S ribosomal protein S5"/>
    <property type="match status" value="1"/>
</dbReference>
<dbReference type="FunFam" id="3.30.230.10:FF:000002">
    <property type="entry name" value="30S ribosomal protein S5"/>
    <property type="match status" value="1"/>
</dbReference>
<dbReference type="Gene3D" id="3.30.160.20">
    <property type="match status" value="1"/>
</dbReference>
<dbReference type="Gene3D" id="3.30.230.10">
    <property type="match status" value="1"/>
</dbReference>
<dbReference type="HAMAP" id="MF_01307_B">
    <property type="entry name" value="Ribosomal_uS5_B"/>
    <property type="match status" value="1"/>
</dbReference>
<dbReference type="InterPro" id="IPR020568">
    <property type="entry name" value="Ribosomal_Su5_D2-typ_SF"/>
</dbReference>
<dbReference type="InterPro" id="IPR000851">
    <property type="entry name" value="Ribosomal_uS5"/>
</dbReference>
<dbReference type="InterPro" id="IPR005712">
    <property type="entry name" value="Ribosomal_uS5_bac-type"/>
</dbReference>
<dbReference type="InterPro" id="IPR005324">
    <property type="entry name" value="Ribosomal_uS5_C"/>
</dbReference>
<dbReference type="InterPro" id="IPR013810">
    <property type="entry name" value="Ribosomal_uS5_N"/>
</dbReference>
<dbReference type="InterPro" id="IPR018192">
    <property type="entry name" value="Ribosomal_uS5_N_CS"/>
</dbReference>
<dbReference type="InterPro" id="IPR014721">
    <property type="entry name" value="Ribsml_uS5_D2-typ_fold_subgr"/>
</dbReference>
<dbReference type="NCBIfam" id="TIGR01021">
    <property type="entry name" value="rpsE_bact"/>
    <property type="match status" value="1"/>
</dbReference>
<dbReference type="PANTHER" id="PTHR48277">
    <property type="entry name" value="MITOCHONDRIAL RIBOSOMAL PROTEIN S5"/>
    <property type="match status" value="1"/>
</dbReference>
<dbReference type="PANTHER" id="PTHR48277:SF1">
    <property type="entry name" value="MITOCHONDRIAL RIBOSOMAL PROTEIN S5"/>
    <property type="match status" value="1"/>
</dbReference>
<dbReference type="Pfam" id="PF00333">
    <property type="entry name" value="Ribosomal_S5"/>
    <property type="match status" value="1"/>
</dbReference>
<dbReference type="Pfam" id="PF03719">
    <property type="entry name" value="Ribosomal_S5_C"/>
    <property type="match status" value="1"/>
</dbReference>
<dbReference type="SUPFAM" id="SSF54768">
    <property type="entry name" value="dsRNA-binding domain-like"/>
    <property type="match status" value="1"/>
</dbReference>
<dbReference type="SUPFAM" id="SSF54211">
    <property type="entry name" value="Ribosomal protein S5 domain 2-like"/>
    <property type="match status" value="1"/>
</dbReference>
<dbReference type="PROSITE" id="PS00585">
    <property type="entry name" value="RIBOSOMAL_S5"/>
    <property type="match status" value="1"/>
</dbReference>
<dbReference type="PROSITE" id="PS50881">
    <property type="entry name" value="S5_DSRBD"/>
    <property type="match status" value="1"/>
</dbReference>
<name>RS5_DECAR</name>
<accession>Q47J86</accession>
<sequence length="175" mass="18379">MAKPERNKKPQQAEERDDGMREKMVAVNRVTKVVKGGRILGFAALTVVGDGDGSIGMGKGKSREVPVAVQKAMEEARRKMAKVSLKSGTVHHTVMGRHGATTVMIQPAPEGTGIIAGGAMRAVFEVVGVTNVVAKAHGSTNPYNIVRATIDGLSKVNTPAEIAAKRGLSVDQIQG</sequence>
<protein>
    <recommendedName>
        <fullName evidence="1">Small ribosomal subunit protein uS5</fullName>
    </recommendedName>
    <alternativeName>
        <fullName evidence="3">30S ribosomal protein S5</fullName>
    </alternativeName>
</protein>
<feature type="chain" id="PRO_0000230342" description="Small ribosomal subunit protein uS5">
    <location>
        <begin position="1"/>
        <end position="175"/>
    </location>
</feature>
<feature type="domain" description="S5 DRBM" evidence="1">
    <location>
        <begin position="20"/>
        <end position="83"/>
    </location>
</feature>
<feature type="region of interest" description="Disordered" evidence="2">
    <location>
        <begin position="1"/>
        <end position="21"/>
    </location>
</feature>
<evidence type="ECO:0000255" key="1">
    <source>
        <dbReference type="HAMAP-Rule" id="MF_01307"/>
    </source>
</evidence>
<evidence type="ECO:0000256" key="2">
    <source>
        <dbReference type="SAM" id="MobiDB-lite"/>
    </source>
</evidence>
<evidence type="ECO:0000305" key="3"/>
<keyword id="KW-0687">Ribonucleoprotein</keyword>
<keyword id="KW-0689">Ribosomal protein</keyword>
<keyword id="KW-0694">RNA-binding</keyword>
<keyword id="KW-0699">rRNA-binding</keyword>